<comment type="function">
    <text>Histone H5 performs the same function as H1, being necessary for the condensation of nucleosome chains into higher order structures, and replaces histone H1 in certain cells.</text>
</comment>
<comment type="subcellular location">
    <subcellularLocation>
        <location>Nucleus</location>
    </subcellularLocation>
    <subcellularLocation>
        <location>Chromosome</location>
    </subcellularLocation>
</comment>
<comment type="tissue specificity">
    <text>Erythroid cells.</text>
</comment>
<comment type="similarity">
    <text evidence="2">Belongs to the histone H1/H5 family.</text>
</comment>
<reference key="1">
    <citation type="journal article" date="1977" name="Biochem. Biophys. Res. Commun.">
        <title>Amino acid sequence homologies between H1 and H5 histones.</title>
        <authorList>
            <person name="Yaguchi M."/>
            <person name="Roy C."/>
            <person name="Dove M."/>
            <person name="Seligy V."/>
        </authorList>
    </citation>
    <scope>PROTEIN SEQUENCE</scope>
</reference>
<accession>P02260</accession>
<feature type="chain" id="PRO_0000196006" description="Histone H5">
    <location>
        <begin position="1"/>
        <end position="38" status="greater than"/>
    </location>
</feature>
<feature type="region of interest" description="Disordered" evidence="1">
    <location>
        <begin position="1"/>
        <end position="38"/>
    </location>
</feature>
<feature type="compositionally biased region" description="Pro residues" evidence="1">
    <location>
        <begin position="1"/>
        <end position="15"/>
    </location>
</feature>
<feature type="compositionally biased region" description="Basic residues" evidence="1">
    <location>
        <begin position="16"/>
        <end position="26"/>
    </location>
</feature>
<feature type="non-terminal residue">
    <location>
        <position position="38"/>
    </location>
</feature>
<keyword id="KW-0158">Chromosome</keyword>
<keyword id="KW-0903">Direct protein sequencing</keyword>
<keyword id="KW-0226">DNA condensation</keyword>
<keyword id="KW-0238">DNA-binding</keyword>
<keyword id="KW-0539">Nucleus</keyword>
<protein>
    <recommendedName>
        <fullName>Histone H5</fullName>
    </recommendedName>
</protein>
<dbReference type="PIR" id="A02590">
    <property type="entry name" value="HSPY5"/>
</dbReference>
<dbReference type="SMR" id="P02260"/>
<dbReference type="GO" id="GO:0005694">
    <property type="term" value="C:chromosome"/>
    <property type="evidence" value="ECO:0007669"/>
    <property type="project" value="UniProtKB-SubCell"/>
</dbReference>
<dbReference type="GO" id="GO:0005634">
    <property type="term" value="C:nucleus"/>
    <property type="evidence" value="ECO:0007669"/>
    <property type="project" value="UniProtKB-SubCell"/>
</dbReference>
<dbReference type="GO" id="GO:0003677">
    <property type="term" value="F:DNA binding"/>
    <property type="evidence" value="ECO:0007669"/>
    <property type="project" value="UniProtKB-KW"/>
</dbReference>
<dbReference type="GO" id="GO:0030261">
    <property type="term" value="P:chromosome condensation"/>
    <property type="evidence" value="ECO:0007669"/>
    <property type="project" value="UniProtKB-KW"/>
</dbReference>
<evidence type="ECO:0000256" key="1">
    <source>
        <dbReference type="SAM" id="MobiDB-lite"/>
    </source>
</evidence>
<evidence type="ECO:0000305" key="2"/>
<sequence>TESPIPVPAPAPAAKPKPKRVSKRPASHPPYSDMIAAA</sequence>
<organism>
    <name type="scientific">Columba livia</name>
    <name type="common">Rock dove</name>
    <dbReference type="NCBI Taxonomy" id="8932"/>
    <lineage>
        <taxon>Eukaryota</taxon>
        <taxon>Metazoa</taxon>
        <taxon>Chordata</taxon>
        <taxon>Craniata</taxon>
        <taxon>Vertebrata</taxon>
        <taxon>Euteleostomi</taxon>
        <taxon>Archelosauria</taxon>
        <taxon>Archosauria</taxon>
        <taxon>Dinosauria</taxon>
        <taxon>Saurischia</taxon>
        <taxon>Theropoda</taxon>
        <taxon>Coelurosauria</taxon>
        <taxon>Aves</taxon>
        <taxon>Neognathae</taxon>
        <taxon>Neoaves</taxon>
        <taxon>Columbimorphae</taxon>
        <taxon>Columbiformes</taxon>
        <taxon>Columbidae</taxon>
        <taxon>Columba</taxon>
    </lineage>
</organism>
<proteinExistence type="evidence at protein level"/>
<name>H5_COLLI</name>